<proteinExistence type="inferred from homology"/>
<comment type="catalytic activity">
    <reaction evidence="1">
        <text>D-ribulose + ATP = D-ribulose 5-phosphate + ADP + H(+)</text>
        <dbReference type="Rhea" id="RHEA:17601"/>
        <dbReference type="ChEBI" id="CHEBI:15378"/>
        <dbReference type="ChEBI" id="CHEBI:17173"/>
        <dbReference type="ChEBI" id="CHEBI:30616"/>
        <dbReference type="ChEBI" id="CHEBI:58121"/>
        <dbReference type="ChEBI" id="CHEBI:456216"/>
        <dbReference type="EC" id="2.7.1.16"/>
    </reaction>
</comment>
<comment type="catalytic activity">
    <reaction evidence="1">
        <text>L-ribulose + ATP = L-ribulose 5-phosphate + ADP + H(+)</text>
        <dbReference type="Rhea" id="RHEA:22072"/>
        <dbReference type="ChEBI" id="CHEBI:15378"/>
        <dbReference type="ChEBI" id="CHEBI:16880"/>
        <dbReference type="ChEBI" id="CHEBI:30616"/>
        <dbReference type="ChEBI" id="CHEBI:58226"/>
        <dbReference type="ChEBI" id="CHEBI:456216"/>
        <dbReference type="EC" id="2.7.1.16"/>
    </reaction>
</comment>
<comment type="pathway">
    <text evidence="1">Carbohydrate degradation; L-arabinose degradation via L-ribulose; D-xylulose 5-phosphate from L-arabinose (bacterial route): step 2/3.</text>
</comment>
<comment type="similarity">
    <text evidence="1">Belongs to the ribulokinase family.</text>
</comment>
<protein>
    <recommendedName>
        <fullName evidence="1">Ribulokinase</fullName>
        <ecNumber evidence="1">2.7.1.16</ecNumber>
    </recommendedName>
</protein>
<dbReference type="EC" id="2.7.1.16" evidence="1"/>
<dbReference type="EMBL" id="CP000946">
    <property type="protein sequence ID" value="ACA79208.1"/>
    <property type="molecule type" value="Genomic_DNA"/>
</dbReference>
<dbReference type="RefSeq" id="WP_000951777.1">
    <property type="nucleotide sequence ID" value="NZ_MTFT01000035.1"/>
</dbReference>
<dbReference type="SMR" id="B1IRB5"/>
<dbReference type="KEGG" id="ecl:EcolC_3594"/>
<dbReference type="HOGENOM" id="CLU_009281_9_1_6"/>
<dbReference type="UniPathway" id="UPA00145">
    <property type="reaction ID" value="UER00566"/>
</dbReference>
<dbReference type="GO" id="GO:0005737">
    <property type="term" value="C:cytoplasm"/>
    <property type="evidence" value="ECO:0007669"/>
    <property type="project" value="TreeGrafter"/>
</dbReference>
<dbReference type="GO" id="GO:0005524">
    <property type="term" value="F:ATP binding"/>
    <property type="evidence" value="ECO:0007669"/>
    <property type="project" value="UniProtKB-KW"/>
</dbReference>
<dbReference type="GO" id="GO:0019150">
    <property type="term" value="F:D-ribulokinase activity"/>
    <property type="evidence" value="ECO:0007669"/>
    <property type="project" value="TreeGrafter"/>
</dbReference>
<dbReference type="GO" id="GO:0008741">
    <property type="term" value="F:ribulokinase activity"/>
    <property type="evidence" value="ECO:0007669"/>
    <property type="project" value="UniProtKB-UniRule"/>
</dbReference>
<dbReference type="GO" id="GO:0019569">
    <property type="term" value="P:L-arabinose catabolic process to xylulose 5-phosphate"/>
    <property type="evidence" value="ECO:0007669"/>
    <property type="project" value="UniProtKB-UniRule"/>
</dbReference>
<dbReference type="CDD" id="cd07781">
    <property type="entry name" value="ASKHA_NBD_FGGY_L-RBK"/>
    <property type="match status" value="1"/>
</dbReference>
<dbReference type="Gene3D" id="1.20.58.2240">
    <property type="match status" value="1"/>
</dbReference>
<dbReference type="Gene3D" id="3.30.420.40">
    <property type="match status" value="1"/>
</dbReference>
<dbReference type="HAMAP" id="MF_00520">
    <property type="entry name" value="Ribulokinase"/>
    <property type="match status" value="1"/>
</dbReference>
<dbReference type="InterPro" id="IPR043129">
    <property type="entry name" value="ATPase_NBD"/>
</dbReference>
<dbReference type="InterPro" id="IPR018485">
    <property type="entry name" value="FGGY_C"/>
</dbReference>
<dbReference type="InterPro" id="IPR005929">
    <property type="entry name" value="Ribulokinase"/>
</dbReference>
<dbReference type="NCBIfam" id="TIGR01234">
    <property type="entry name" value="L-ribulokinase"/>
    <property type="match status" value="1"/>
</dbReference>
<dbReference type="NCBIfam" id="NF003154">
    <property type="entry name" value="PRK04123.1"/>
    <property type="match status" value="1"/>
</dbReference>
<dbReference type="PANTHER" id="PTHR43435:SF4">
    <property type="entry name" value="FGGY CARBOHYDRATE KINASE DOMAIN-CONTAINING PROTEIN"/>
    <property type="match status" value="1"/>
</dbReference>
<dbReference type="PANTHER" id="PTHR43435">
    <property type="entry name" value="RIBULOKINASE"/>
    <property type="match status" value="1"/>
</dbReference>
<dbReference type="Pfam" id="PF02782">
    <property type="entry name" value="FGGY_C"/>
    <property type="match status" value="1"/>
</dbReference>
<dbReference type="SUPFAM" id="SSF53067">
    <property type="entry name" value="Actin-like ATPase domain"/>
    <property type="match status" value="2"/>
</dbReference>
<gene>
    <name evidence="1" type="primary">araB</name>
    <name type="ordered locus">EcolC_3594</name>
</gene>
<accession>B1IRB5</accession>
<keyword id="KW-0054">Arabinose catabolism</keyword>
<keyword id="KW-0067">ATP-binding</keyword>
<keyword id="KW-0119">Carbohydrate metabolism</keyword>
<keyword id="KW-0418">Kinase</keyword>
<keyword id="KW-0547">Nucleotide-binding</keyword>
<keyword id="KW-0808">Transferase</keyword>
<feature type="chain" id="PRO_1000081680" description="Ribulokinase">
    <location>
        <begin position="1"/>
        <end position="566"/>
    </location>
</feature>
<evidence type="ECO:0000255" key="1">
    <source>
        <dbReference type="HAMAP-Rule" id="MF_00520"/>
    </source>
</evidence>
<sequence length="566" mass="61114">MAIAIGLDFGSDSVRALAVDCASGEEIATSVEWYPRWQKGQFCDAPNNQFRHHPRDYIESMEAALKTVLAELSVEQRAAVVGIGVDSTGSTPAPIDADGNVLALRPEFAENPNAMFVLWKDHTAVEEAEEITRLCHAPGNVDYSRYIGGIYSSEWFWAKILHVTRQDSAVAQSAASWIELCDWVPALLSGTTRPQDIRRGRCSAGHKSLWHESWGGLPPASFFDELDPILNRHLPSPLFTDTWTADIPVGTLCPEWAQRLGLPESVVISGGAFDCHMGAVGAGAQPNALVKVIGTSTCDILIADKQSVGERAVKGICGQVDGSVVPGFIGLEAGQSAFGDIYAWFGRVLSWPLEQLAAQHPELKAQINASQKQLLPALTEAWAKNPSLDHLPVVLDWFNGRRSPNANQRLKGVITDLNLATDAPLLFGGLIAATAFGARAIMECFTDQGIAVNNVMALGGIARKNQVIMQACCDVLNRPLQIVASDQCCALGAAIFAAVAAKVHADIPSAQQKMASAVEKTLQPRSEQAQRFEQLYRRYQQWAMSAEQHYLPTSAPAQAAQAVATL</sequence>
<organism>
    <name type="scientific">Escherichia coli (strain ATCC 8739 / DSM 1576 / NBRC 3972 / NCIMB 8545 / WDCM 00012 / Crooks)</name>
    <dbReference type="NCBI Taxonomy" id="481805"/>
    <lineage>
        <taxon>Bacteria</taxon>
        <taxon>Pseudomonadati</taxon>
        <taxon>Pseudomonadota</taxon>
        <taxon>Gammaproteobacteria</taxon>
        <taxon>Enterobacterales</taxon>
        <taxon>Enterobacteriaceae</taxon>
        <taxon>Escherichia</taxon>
    </lineage>
</organism>
<name>ARAB_ECOLC</name>
<reference key="1">
    <citation type="submission" date="2008-02" db="EMBL/GenBank/DDBJ databases">
        <title>Complete sequence of Escherichia coli C str. ATCC 8739.</title>
        <authorList>
            <person name="Copeland A."/>
            <person name="Lucas S."/>
            <person name="Lapidus A."/>
            <person name="Glavina del Rio T."/>
            <person name="Dalin E."/>
            <person name="Tice H."/>
            <person name="Bruce D."/>
            <person name="Goodwin L."/>
            <person name="Pitluck S."/>
            <person name="Kiss H."/>
            <person name="Brettin T."/>
            <person name="Detter J.C."/>
            <person name="Han C."/>
            <person name="Kuske C.R."/>
            <person name="Schmutz J."/>
            <person name="Larimer F."/>
            <person name="Land M."/>
            <person name="Hauser L."/>
            <person name="Kyrpides N."/>
            <person name="Mikhailova N."/>
            <person name="Ingram L."/>
            <person name="Richardson P."/>
        </authorList>
    </citation>
    <scope>NUCLEOTIDE SEQUENCE [LARGE SCALE GENOMIC DNA]</scope>
    <source>
        <strain>ATCC 8739 / DSM 1576 / NBRC 3972 / NCIMB 8545 / WDCM 00012 / Crooks</strain>
    </source>
</reference>